<accession>Q645S2</accession>
<comment type="function">
    <text evidence="1">Receptor that may play a role in the perception of bitterness and is gustducin-linked. May play a role in sensing the chemical composition of the gastrointestinal content. The activity of this receptor may stimulate alpha gustducin, mediate PLC-beta-2 activation and lead to the gating of TRPM5 (By similarity).</text>
</comment>
<comment type="subcellular location">
    <subcellularLocation>
        <location>Membrane</location>
        <topology>Multi-pass membrane protein</topology>
    </subcellularLocation>
</comment>
<comment type="miscellaneous">
    <text>Most taste cells may be activated by a limited number of bitter compounds; individual taste cells can discriminate among bitter stimuli.</text>
</comment>
<comment type="similarity">
    <text evidence="3">Belongs to the G-protein coupled receptor T2R family.</text>
</comment>
<dbReference type="EMBL" id="AY725022">
    <property type="protein sequence ID" value="AAU21197.1"/>
    <property type="molecule type" value="Genomic_DNA"/>
</dbReference>
<dbReference type="SMR" id="Q645S2"/>
<dbReference type="FunCoup" id="Q645S2">
    <property type="interactions" value="208"/>
</dbReference>
<dbReference type="STRING" id="9544.ENSMMUP00000075295"/>
<dbReference type="GlyCosmos" id="Q645S2">
    <property type="glycosylation" value="2 sites, No reported glycans"/>
</dbReference>
<dbReference type="PaxDb" id="9544-ENSMMUP00000015456"/>
<dbReference type="eggNOG" id="ENOG502S2SI">
    <property type="taxonomic scope" value="Eukaryota"/>
</dbReference>
<dbReference type="InParanoid" id="Q645S2"/>
<dbReference type="Proteomes" id="UP000006718">
    <property type="component" value="Unassembled WGS sequence"/>
</dbReference>
<dbReference type="GO" id="GO:0016020">
    <property type="term" value="C:membrane"/>
    <property type="evidence" value="ECO:0000318"/>
    <property type="project" value="GO_Central"/>
</dbReference>
<dbReference type="GO" id="GO:0005886">
    <property type="term" value="C:plasma membrane"/>
    <property type="evidence" value="ECO:0007669"/>
    <property type="project" value="UniProtKB-ARBA"/>
</dbReference>
<dbReference type="GO" id="GO:0033038">
    <property type="term" value="F:bitter taste receptor activity"/>
    <property type="evidence" value="ECO:0007669"/>
    <property type="project" value="InterPro"/>
</dbReference>
<dbReference type="GO" id="GO:0004930">
    <property type="term" value="F:G protein-coupled receptor activity"/>
    <property type="evidence" value="ECO:0007669"/>
    <property type="project" value="UniProtKB-KW"/>
</dbReference>
<dbReference type="CDD" id="cd15018">
    <property type="entry name" value="7tm_TAS2R41-like"/>
    <property type="match status" value="1"/>
</dbReference>
<dbReference type="FunFam" id="1.20.1070.10:FF:000055">
    <property type="entry name" value="Taste receptor type 2"/>
    <property type="match status" value="1"/>
</dbReference>
<dbReference type="Gene3D" id="1.20.1070.10">
    <property type="entry name" value="Rhodopsin 7-helix transmembrane proteins"/>
    <property type="match status" value="1"/>
</dbReference>
<dbReference type="InterPro" id="IPR007960">
    <property type="entry name" value="TAS2R"/>
</dbReference>
<dbReference type="PANTHER" id="PTHR11394">
    <property type="entry name" value="TASTE RECEPTOR TYPE 2"/>
    <property type="match status" value="1"/>
</dbReference>
<dbReference type="PANTHER" id="PTHR11394:SF32">
    <property type="entry name" value="TASTE RECEPTOR TYPE 2 MEMBER 60"/>
    <property type="match status" value="1"/>
</dbReference>
<dbReference type="Pfam" id="PF05296">
    <property type="entry name" value="TAS2R"/>
    <property type="match status" value="1"/>
</dbReference>
<dbReference type="SUPFAM" id="SSF81321">
    <property type="entry name" value="Family A G protein-coupled receptor-like"/>
    <property type="match status" value="1"/>
</dbReference>
<gene>
    <name type="primary">TAS2R60</name>
</gene>
<reference key="1">
    <citation type="journal article" date="2005" name="Mol. Biol. Evol.">
        <title>Evolution of bitter taste receptors in humans and apes.</title>
        <authorList>
            <person name="Fischer A."/>
            <person name="Gilad Y."/>
            <person name="Man O."/>
            <person name="Paeaebo S."/>
        </authorList>
    </citation>
    <scope>NUCLEOTIDE SEQUENCE [GENOMIC DNA]</scope>
</reference>
<sequence length="318" mass="36278">MNGDHMVLGSSVTDQKAIILVIILLLLCLVAIAGNGFITAALGVEWVLRGTLLPCDKLLVSLRASRFCLQWVVMGKTIYVLLYPTAFPYNPVLQFLAFQWDFLNAATLWFSSWLSVFYCVKIATFTHPVFLWLKHKLSEWVPWMFFSSVGLSSFTTILFFIGNHSIYQNYLRNHLQPWNVTGNSIWSYCEKFYLFPVKMITWTMPTAVFFICMILLITSLGRHMEKALLTTSGFREPSVQAHVKALLALLSLAMLFISYFLSLVLSAAGIFPPLDFKFWVGESVIYLCAGVHPIILLFSNRRLRAVLERCRSSRCRTP</sequence>
<organism>
    <name type="scientific">Macaca mulatta</name>
    <name type="common">Rhesus macaque</name>
    <dbReference type="NCBI Taxonomy" id="9544"/>
    <lineage>
        <taxon>Eukaryota</taxon>
        <taxon>Metazoa</taxon>
        <taxon>Chordata</taxon>
        <taxon>Craniata</taxon>
        <taxon>Vertebrata</taxon>
        <taxon>Euteleostomi</taxon>
        <taxon>Mammalia</taxon>
        <taxon>Eutheria</taxon>
        <taxon>Euarchontoglires</taxon>
        <taxon>Primates</taxon>
        <taxon>Haplorrhini</taxon>
        <taxon>Catarrhini</taxon>
        <taxon>Cercopithecidae</taxon>
        <taxon>Cercopithecinae</taxon>
        <taxon>Macaca</taxon>
    </lineage>
</organism>
<evidence type="ECO:0000250" key="1"/>
<evidence type="ECO:0000255" key="2"/>
<evidence type="ECO:0000305" key="3"/>
<keyword id="KW-0297">G-protein coupled receptor</keyword>
<keyword id="KW-0325">Glycoprotein</keyword>
<keyword id="KW-0472">Membrane</keyword>
<keyword id="KW-0675">Receptor</keyword>
<keyword id="KW-1185">Reference proteome</keyword>
<keyword id="KW-0716">Sensory transduction</keyword>
<keyword id="KW-0919">Taste</keyword>
<keyword id="KW-0807">Transducer</keyword>
<keyword id="KW-0812">Transmembrane</keyword>
<keyword id="KW-1133">Transmembrane helix</keyword>
<name>T2R60_MACMU</name>
<protein>
    <recommendedName>
        <fullName>Taste receptor type 2 member 60</fullName>
        <shortName>T2R60</shortName>
    </recommendedName>
    <alternativeName>
        <fullName>T2R56</fullName>
    </alternativeName>
</protein>
<proteinExistence type="inferred from homology"/>
<feature type="chain" id="PRO_0000082352" description="Taste receptor type 2 member 60">
    <location>
        <begin position="1"/>
        <end position="318"/>
    </location>
</feature>
<feature type="topological domain" description="Extracellular" evidence="2">
    <location>
        <begin position="1"/>
        <end position="7"/>
    </location>
</feature>
<feature type="transmembrane region" description="Helical; Name=1" evidence="2">
    <location>
        <begin position="8"/>
        <end position="28"/>
    </location>
</feature>
<feature type="topological domain" description="Cytoplasmic" evidence="2">
    <location>
        <begin position="29"/>
        <end position="40"/>
    </location>
</feature>
<feature type="transmembrane region" description="Helical; Name=2" evidence="2">
    <location>
        <begin position="41"/>
        <end position="61"/>
    </location>
</feature>
<feature type="topological domain" description="Extracellular" evidence="2">
    <location>
        <begin position="62"/>
        <end position="88"/>
    </location>
</feature>
<feature type="transmembrane region" description="Helical; Name=3" evidence="2">
    <location>
        <begin position="89"/>
        <end position="109"/>
    </location>
</feature>
<feature type="topological domain" description="Cytoplasmic" evidence="2">
    <location>
        <begin position="110"/>
        <end position="128"/>
    </location>
</feature>
<feature type="transmembrane region" description="Helical; Name=4" evidence="2">
    <location>
        <begin position="129"/>
        <end position="149"/>
    </location>
</feature>
<feature type="topological domain" description="Extracellular" evidence="2">
    <location>
        <begin position="150"/>
        <end position="183"/>
    </location>
</feature>
<feature type="transmembrane region" description="Helical; Name=5" evidence="2">
    <location>
        <begin position="184"/>
        <end position="204"/>
    </location>
</feature>
<feature type="topological domain" description="Cytoplasmic" evidence="2">
    <location>
        <begin position="205"/>
        <end position="234"/>
    </location>
</feature>
<feature type="transmembrane region" description="Helical; Name=6" evidence="2">
    <location>
        <begin position="235"/>
        <end position="255"/>
    </location>
</feature>
<feature type="topological domain" description="Extracellular" evidence="2">
    <location>
        <begin position="256"/>
        <end position="264"/>
    </location>
</feature>
<feature type="transmembrane region" description="Helical; Name=7" evidence="2">
    <location>
        <begin position="265"/>
        <end position="285"/>
    </location>
</feature>
<feature type="topological domain" description="Cytoplasmic" evidence="2">
    <location>
        <begin position="286"/>
        <end position="318"/>
    </location>
</feature>
<feature type="glycosylation site" description="N-linked (GlcNAc...) asparagine" evidence="2">
    <location>
        <position position="163"/>
    </location>
</feature>
<feature type="glycosylation site" description="N-linked (GlcNAc...) asparagine" evidence="2">
    <location>
        <position position="179"/>
    </location>
</feature>